<organism>
    <name type="scientific">Burkholderia mallei (strain NCTC 10247)</name>
    <dbReference type="NCBI Taxonomy" id="320389"/>
    <lineage>
        <taxon>Bacteria</taxon>
        <taxon>Pseudomonadati</taxon>
        <taxon>Pseudomonadota</taxon>
        <taxon>Betaproteobacteria</taxon>
        <taxon>Burkholderiales</taxon>
        <taxon>Burkholderiaceae</taxon>
        <taxon>Burkholderia</taxon>
        <taxon>pseudomallei group</taxon>
    </lineage>
</organism>
<gene>
    <name evidence="1" type="primary">ttcA</name>
    <name type="ordered locus">BMA10247_2245</name>
</gene>
<feature type="chain" id="PRO_0000348686" description="tRNA-cytidine(32) 2-sulfurtransferase">
    <location>
        <begin position="1"/>
        <end position="331"/>
    </location>
</feature>
<feature type="short sequence motif" description="PP-loop motif" evidence="1">
    <location>
        <begin position="73"/>
        <end position="78"/>
    </location>
</feature>
<feature type="binding site" evidence="1">
    <location>
        <position position="148"/>
    </location>
    <ligand>
        <name>[4Fe-4S] cluster</name>
        <dbReference type="ChEBI" id="CHEBI:49883"/>
    </ligand>
</feature>
<feature type="binding site" evidence="1">
    <location>
        <position position="151"/>
    </location>
    <ligand>
        <name>[4Fe-4S] cluster</name>
        <dbReference type="ChEBI" id="CHEBI:49883"/>
    </ligand>
</feature>
<feature type="binding site" evidence="1">
    <location>
        <position position="239"/>
    </location>
    <ligand>
        <name>[4Fe-4S] cluster</name>
        <dbReference type="ChEBI" id="CHEBI:49883"/>
    </ligand>
</feature>
<dbReference type="EC" id="2.8.1.-" evidence="1"/>
<dbReference type="EMBL" id="CP000548">
    <property type="protein sequence ID" value="ABO07221.1"/>
    <property type="molecule type" value="Genomic_DNA"/>
</dbReference>
<dbReference type="RefSeq" id="WP_004189298.1">
    <property type="nucleotide sequence ID" value="NZ_CP007802.1"/>
</dbReference>
<dbReference type="SMR" id="A3MND8"/>
<dbReference type="GeneID" id="93058831"/>
<dbReference type="KEGG" id="bmaz:BM44_1005"/>
<dbReference type="KEGG" id="bmn:BMA10247_2245"/>
<dbReference type="PATRIC" id="fig|320389.8.peg.1117"/>
<dbReference type="GO" id="GO:0005737">
    <property type="term" value="C:cytoplasm"/>
    <property type="evidence" value="ECO:0007669"/>
    <property type="project" value="UniProtKB-SubCell"/>
</dbReference>
<dbReference type="GO" id="GO:0051539">
    <property type="term" value="F:4 iron, 4 sulfur cluster binding"/>
    <property type="evidence" value="ECO:0007669"/>
    <property type="project" value="UniProtKB-UniRule"/>
</dbReference>
<dbReference type="GO" id="GO:0005524">
    <property type="term" value="F:ATP binding"/>
    <property type="evidence" value="ECO:0007669"/>
    <property type="project" value="UniProtKB-UniRule"/>
</dbReference>
<dbReference type="GO" id="GO:0000287">
    <property type="term" value="F:magnesium ion binding"/>
    <property type="evidence" value="ECO:0007669"/>
    <property type="project" value="UniProtKB-UniRule"/>
</dbReference>
<dbReference type="GO" id="GO:0016783">
    <property type="term" value="F:sulfurtransferase activity"/>
    <property type="evidence" value="ECO:0007669"/>
    <property type="project" value="UniProtKB-UniRule"/>
</dbReference>
<dbReference type="GO" id="GO:0000049">
    <property type="term" value="F:tRNA binding"/>
    <property type="evidence" value="ECO:0007669"/>
    <property type="project" value="UniProtKB-KW"/>
</dbReference>
<dbReference type="GO" id="GO:0034227">
    <property type="term" value="P:tRNA thio-modification"/>
    <property type="evidence" value="ECO:0007669"/>
    <property type="project" value="UniProtKB-UniRule"/>
</dbReference>
<dbReference type="CDD" id="cd24138">
    <property type="entry name" value="TtcA-like"/>
    <property type="match status" value="1"/>
</dbReference>
<dbReference type="Gene3D" id="3.40.50.620">
    <property type="entry name" value="HUPs"/>
    <property type="match status" value="1"/>
</dbReference>
<dbReference type="HAMAP" id="MF_01850">
    <property type="entry name" value="TtcA"/>
    <property type="match status" value="1"/>
</dbReference>
<dbReference type="InterPro" id="IPR014729">
    <property type="entry name" value="Rossmann-like_a/b/a_fold"/>
</dbReference>
<dbReference type="InterPro" id="IPR011063">
    <property type="entry name" value="TilS/TtcA_N"/>
</dbReference>
<dbReference type="InterPro" id="IPR012089">
    <property type="entry name" value="tRNA_Cyd_32_2_STrfase"/>
</dbReference>
<dbReference type="NCBIfam" id="NF007972">
    <property type="entry name" value="PRK10696.1"/>
    <property type="match status" value="1"/>
</dbReference>
<dbReference type="PANTHER" id="PTHR43686:SF1">
    <property type="entry name" value="AMINOTRAN_5 DOMAIN-CONTAINING PROTEIN"/>
    <property type="match status" value="1"/>
</dbReference>
<dbReference type="PANTHER" id="PTHR43686">
    <property type="entry name" value="SULFURTRANSFERASE-RELATED"/>
    <property type="match status" value="1"/>
</dbReference>
<dbReference type="Pfam" id="PF01171">
    <property type="entry name" value="ATP_bind_3"/>
    <property type="match status" value="1"/>
</dbReference>
<dbReference type="SUPFAM" id="SSF52402">
    <property type="entry name" value="Adenine nucleotide alpha hydrolases-like"/>
    <property type="match status" value="1"/>
</dbReference>
<reference key="1">
    <citation type="journal article" date="2010" name="Genome Biol. Evol.">
        <title>Continuing evolution of Burkholderia mallei through genome reduction and large-scale rearrangements.</title>
        <authorList>
            <person name="Losada L."/>
            <person name="Ronning C.M."/>
            <person name="DeShazer D."/>
            <person name="Woods D."/>
            <person name="Fedorova N."/>
            <person name="Kim H.S."/>
            <person name="Shabalina S.A."/>
            <person name="Pearson T.R."/>
            <person name="Brinkac L."/>
            <person name="Tan P."/>
            <person name="Nandi T."/>
            <person name="Crabtree J."/>
            <person name="Badger J."/>
            <person name="Beckstrom-Sternberg S."/>
            <person name="Saqib M."/>
            <person name="Schutzer S.E."/>
            <person name="Keim P."/>
            <person name="Nierman W.C."/>
        </authorList>
    </citation>
    <scope>NUCLEOTIDE SEQUENCE [LARGE SCALE GENOMIC DNA]</scope>
    <source>
        <strain>NCTC 10247</strain>
    </source>
</reference>
<name>TTCA_BURM7</name>
<protein>
    <recommendedName>
        <fullName evidence="1">tRNA-cytidine(32) 2-sulfurtransferase</fullName>
        <ecNumber evidence="1">2.8.1.-</ecNumber>
    </recommendedName>
    <alternativeName>
        <fullName evidence="1">Two-thiocytidine biosynthesis protein A</fullName>
    </alternativeName>
    <alternativeName>
        <fullName evidence="1">tRNA 2-thiocytidine biosynthesis protein TtcA</fullName>
    </alternativeName>
</protein>
<accession>A3MND8</accession>
<comment type="function">
    <text evidence="1">Catalyzes the ATP-dependent 2-thiolation of cytidine in position 32 of tRNA, to form 2-thiocytidine (s(2)C32). The sulfur atoms are provided by the cysteine/cysteine desulfurase (IscS) system.</text>
</comment>
<comment type="catalytic activity">
    <reaction evidence="1">
        <text>cytidine(32) in tRNA + S-sulfanyl-L-cysteinyl-[cysteine desulfurase] + AH2 + ATP = 2-thiocytidine(32) in tRNA + L-cysteinyl-[cysteine desulfurase] + A + AMP + diphosphate + H(+)</text>
        <dbReference type="Rhea" id="RHEA:57048"/>
        <dbReference type="Rhea" id="RHEA-COMP:10288"/>
        <dbReference type="Rhea" id="RHEA-COMP:12157"/>
        <dbReference type="Rhea" id="RHEA-COMP:12158"/>
        <dbReference type="Rhea" id="RHEA-COMP:14821"/>
        <dbReference type="ChEBI" id="CHEBI:13193"/>
        <dbReference type="ChEBI" id="CHEBI:15378"/>
        <dbReference type="ChEBI" id="CHEBI:17499"/>
        <dbReference type="ChEBI" id="CHEBI:29950"/>
        <dbReference type="ChEBI" id="CHEBI:30616"/>
        <dbReference type="ChEBI" id="CHEBI:33019"/>
        <dbReference type="ChEBI" id="CHEBI:61963"/>
        <dbReference type="ChEBI" id="CHEBI:82748"/>
        <dbReference type="ChEBI" id="CHEBI:141453"/>
        <dbReference type="ChEBI" id="CHEBI:456215"/>
    </reaction>
    <physiologicalReaction direction="left-to-right" evidence="1">
        <dbReference type="Rhea" id="RHEA:57049"/>
    </physiologicalReaction>
</comment>
<comment type="cofactor">
    <cofactor evidence="1">
        <name>Mg(2+)</name>
        <dbReference type="ChEBI" id="CHEBI:18420"/>
    </cofactor>
</comment>
<comment type="cofactor">
    <cofactor evidence="1">
        <name>[4Fe-4S] cluster</name>
        <dbReference type="ChEBI" id="CHEBI:49883"/>
    </cofactor>
    <text evidence="1">Binds 1 [4Fe-4S] cluster per subunit. The cluster is chelated by three Cys residues, the fourth Fe has a free coordination site that may bind a sulfur atom transferred from the persulfide of IscS.</text>
</comment>
<comment type="pathway">
    <text evidence="1">tRNA modification.</text>
</comment>
<comment type="subunit">
    <text evidence="1">Homodimer.</text>
</comment>
<comment type="subcellular location">
    <subcellularLocation>
        <location evidence="1">Cytoplasm</location>
    </subcellularLocation>
</comment>
<comment type="miscellaneous">
    <text evidence="1">The thiolation reaction likely consists of two steps: a first activation step by ATP to form an adenylated intermediate of the target base of tRNA, and a second nucleophilic substitution step of the sulfur (S) atom supplied by the hydrosulfide attached to the Fe-S cluster.</text>
</comment>
<comment type="similarity">
    <text evidence="1">Belongs to the TtcA family.</text>
</comment>
<keyword id="KW-0004">4Fe-4S</keyword>
<keyword id="KW-0067">ATP-binding</keyword>
<keyword id="KW-0963">Cytoplasm</keyword>
<keyword id="KW-0408">Iron</keyword>
<keyword id="KW-0411">Iron-sulfur</keyword>
<keyword id="KW-0460">Magnesium</keyword>
<keyword id="KW-0479">Metal-binding</keyword>
<keyword id="KW-0547">Nucleotide-binding</keyword>
<keyword id="KW-0694">RNA-binding</keyword>
<keyword id="KW-0808">Transferase</keyword>
<keyword id="KW-0819">tRNA processing</keyword>
<keyword id="KW-0820">tRNA-binding</keyword>
<sequence>MNAPHTPHLNEAEAAAAVEANAAELGRRALTRREQKEAYENNKLFKRLVRQVGQAIGDYNMIEHGDKVMVCLSGGKDSYALLDILLRLRERAPIDFDIVAVNLDQKQPGFPEHVLPEYLTKIGVPFHIENQDTYSIVKRLVPEGKTTCSLCSRLRRGILYRVAGELGATKIALGHHRDDIVQTLLLNMFYGGKLKGMPPKLQSDDGKNIVIRPLAYAKETDLEKYAELREFPIIPCNLCGSQPNLKRAEMKALIRDWDKRFPGRVDNMFNALANVVPSHLMDARLFPFAGLRATGEADPNGDIAFDEDPCGTDASAPGGAKSVSIVQFDDL</sequence>
<evidence type="ECO:0000255" key="1">
    <source>
        <dbReference type="HAMAP-Rule" id="MF_01850"/>
    </source>
</evidence>
<proteinExistence type="inferred from homology"/>